<protein>
    <recommendedName>
        <fullName evidence="1">Regulator of ribonuclease activity B</fullName>
    </recommendedName>
</protein>
<reference key="1">
    <citation type="journal article" date="2005" name="Proc. Natl. Acad. Sci. U.S.A.">
        <title>The psychrophilic lifestyle as revealed by the genome sequence of Colwellia psychrerythraea 34H through genomic and proteomic analyses.</title>
        <authorList>
            <person name="Methe B.A."/>
            <person name="Nelson K.E."/>
            <person name="Deming J.W."/>
            <person name="Momen B."/>
            <person name="Melamud E."/>
            <person name="Zhang X."/>
            <person name="Moult J."/>
            <person name="Madupu R."/>
            <person name="Nelson W.C."/>
            <person name="Dodson R.J."/>
            <person name="Brinkac L.M."/>
            <person name="Daugherty S.C."/>
            <person name="Durkin A.S."/>
            <person name="DeBoy R.T."/>
            <person name="Kolonay J.F."/>
            <person name="Sullivan S.A."/>
            <person name="Zhou L."/>
            <person name="Davidsen T.M."/>
            <person name="Wu M."/>
            <person name="Huston A.L."/>
            <person name="Lewis M."/>
            <person name="Weaver B."/>
            <person name="Weidman J.F."/>
            <person name="Khouri H."/>
            <person name="Utterback T.R."/>
            <person name="Feldblyum T.V."/>
            <person name="Fraser C.M."/>
        </authorList>
    </citation>
    <scope>NUCLEOTIDE SEQUENCE [LARGE SCALE GENOMIC DNA]</scope>
    <source>
        <strain>34H / ATCC BAA-681</strain>
    </source>
</reference>
<accession>Q487J9</accession>
<name>RRAB_COLP3</name>
<proteinExistence type="inferred from homology"/>
<organism>
    <name type="scientific">Colwellia psychrerythraea (strain 34H / ATCC BAA-681)</name>
    <name type="common">Vibrio psychroerythus</name>
    <dbReference type="NCBI Taxonomy" id="167879"/>
    <lineage>
        <taxon>Bacteria</taxon>
        <taxon>Pseudomonadati</taxon>
        <taxon>Pseudomonadota</taxon>
        <taxon>Gammaproteobacteria</taxon>
        <taxon>Alteromonadales</taxon>
        <taxon>Colwelliaceae</taxon>
        <taxon>Colwellia</taxon>
    </lineage>
</organism>
<comment type="function">
    <text evidence="1">Globally modulates RNA abundance by binding to RNase E (Rne) and regulating its endonucleolytic activity. Can modulate Rne action in a substrate-dependent manner by altering the composition of the degradosome.</text>
</comment>
<comment type="subunit">
    <text evidence="1">Interacts with the C-terminal region of Rne.</text>
</comment>
<comment type="subcellular location">
    <subcellularLocation>
        <location evidence="1">Cytoplasm</location>
    </subcellularLocation>
</comment>
<comment type="similarity">
    <text evidence="1">Belongs to the RraB family.</text>
</comment>
<feature type="chain" id="PRO_0000404305" description="Regulator of ribonuclease activity B">
    <location>
        <begin position="1"/>
        <end position="116"/>
    </location>
</feature>
<evidence type="ECO:0000255" key="1">
    <source>
        <dbReference type="HAMAP-Rule" id="MF_01888"/>
    </source>
</evidence>
<gene>
    <name evidence="1" type="primary">rraB</name>
    <name type="ordered locus">CPS_1017</name>
</gene>
<sequence>MIDEELQQWFSHTEMLIAELLEDGTNDEVYHTIEHHFASSDFDLLEKAAIAAFKLGLEIEEPEEAELENGDKVFAFDIATEQMLDVNLIKKETQAMFELAKQCGVDYDGWGTYFEE</sequence>
<dbReference type="EMBL" id="CP000083">
    <property type="protein sequence ID" value="AAZ26421.1"/>
    <property type="molecule type" value="Genomic_DNA"/>
</dbReference>
<dbReference type="RefSeq" id="WP_011041860.1">
    <property type="nucleotide sequence ID" value="NC_003910.7"/>
</dbReference>
<dbReference type="SMR" id="Q487J9"/>
<dbReference type="STRING" id="167879.CPS_1017"/>
<dbReference type="KEGG" id="cps:CPS_1017"/>
<dbReference type="eggNOG" id="COG3076">
    <property type="taxonomic scope" value="Bacteria"/>
</dbReference>
<dbReference type="HOGENOM" id="CLU_128640_0_0_6"/>
<dbReference type="Proteomes" id="UP000000547">
    <property type="component" value="Chromosome"/>
</dbReference>
<dbReference type="GO" id="GO:0005737">
    <property type="term" value="C:cytoplasm"/>
    <property type="evidence" value="ECO:0007669"/>
    <property type="project" value="UniProtKB-SubCell"/>
</dbReference>
<dbReference type="GO" id="GO:0060698">
    <property type="term" value="F:endoribonuclease inhibitor activity"/>
    <property type="evidence" value="ECO:0007669"/>
    <property type="project" value="UniProtKB-UniRule"/>
</dbReference>
<dbReference type="GO" id="GO:0019899">
    <property type="term" value="F:enzyme binding"/>
    <property type="evidence" value="ECO:0007669"/>
    <property type="project" value="UniProtKB-UniRule"/>
</dbReference>
<dbReference type="Gene3D" id="3.30.70.970">
    <property type="entry name" value="RraB-like"/>
    <property type="match status" value="1"/>
</dbReference>
<dbReference type="HAMAP" id="MF_01888">
    <property type="entry name" value="RraB"/>
    <property type="match status" value="1"/>
</dbReference>
<dbReference type="InterPro" id="IPR016716">
    <property type="entry name" value="RraB"/>
</dbReference>
<dbReference type="InterPro" id="IPR036701">
    <property type="entry name" value="RraB-like_sf"/>
</dbReference>
<dbReference type="InterPro" id="IPR009671">
    <property type="entry name" value="RraB_dom"/>
</dbReference>
<dbReference type="NCBIfam" id="NF008393">
    <property type="entry name" value="PRK11191.1"/>
    <property type="match status" value="1"/>
</dbReference>
<dbReference type="Pfam" id="PF06877">
    <property type="entry name" value="RraB"/>
    <property type="match status" value="1"/>
</dbReference>
<dbReference type="PIRSF" id="PIRSF018193">
    <property type="entry name" value="UCP018193"/>
    <property type="match status" value="1"/>
</dbReference>
<dbReference type="SUPFAM" id="SSF89946">
    <property type="entry name" value="Hypothetical protein VC0424"/>
    <property type="match status" value="1"/>
</dbReference>
<keyword id="KW-0963">Cytoplasm</keyword>